<dbReference type="EMBL" id="M99576">
    <property type="protein sequence ID" value="AAA02570.1"/>
    <property type="molecule type" value="Genomic_RNA"/>
</dbReference>
<dbReference type="EMBL" id="AY585228">
    <property type="protein sequence ID" value="AAT84356.1"/>
    <property type="molecule type" value="Genomic_RNA"/>
</dbReference>
<dbReference type="EMBL" id="AY585229">
    <property type="protein sequence ID" value="AAT84364.1"/>
    <property type="molecule type" value="Genomic_RNA"/>
</dbReference>
<dbReference type="EMBL" id="AY391777">
    <property type="protein sequence ID" value="AAR01017.1"/>
    <property type="molecule type" value="Genomic_RNA"/>
</dbReference>
<dbReference type="PIR" id="B44275">
    <property type="entry name" value="B44275"/>
</dbReference>
<dbReference type="RefSeq" id="YP_009555243.1">
    <property type="nucleotide sequence ID" value="NC_006213.1"/>
</dbReference>
<dbReference type="GeneID" id="39105217"/>
<dbReference type="OrthoDB" id="26588at10239"/>
<dbReference type="Proteomes" id="UP000007552">
    <property type="component" value="Genome"/>
</dbReference>
<dbReference type="Proteomes" id="UP000100580">
    <property type="component" value="Genome"/>
</dbReference>
<dbReference type="Proteomes" id="UP000180344">
    <property type="component" value="Genome"/>
</dbReference>
<dbReference type="GO" id="GO:0044178">
    <property type="term" value="C:host cell Golgi membrane"/>
    <property type="evidence" value="ECO:0007669"/>
    <property type="project" value="UniProtKB-SubCell"/>
</dbReference>
<dbReference type="GO" id="GO:0016020">
    <property type="term" value="C:membrane"/>
    <property type="evidence" value="ECO:0007669"/>
    <property type="project" value="UniProtKB-UniRule"/>
</dbReference>
<dbReference type="GO" id="GO:0140975">
    <property type="term" value="P:disruption of cellular anatomical structure in another organism"/>
    <property type="evidence" value="ECO:0007669"/>
    <property type="project" value="UniProtKB-UniRule"/>
</dbReference>
<dbReference type="GO" id="GO:0046760">
    <property type="term" value="P:viral budding from Golgi membrane"/>
    <property type="evidence" value="ECO:0007669"/>
    <property type="project" value="UniProtKB-UniRule"/>
</dbReference>
<dbReference type="CDD" id="cd21532">
    <property type="entry name" value="HKU1-CoV-like_E"/>
    <property type="match status" value="1"/>
</dbReference>
<dbReference type="HAMAP" id="MF_04204">
    <property type="entry name" value="BETA_CORONA_E"/>
    <property type="match status" value="1"/>
</dbReference>
<dbReference type="InterPro" id="IPR043506">
    <property type="entry name" value="E_protein_bCoV"/>
</dbReference>
<dbReference type="InterPro" id="IPR003873">
    <property type="entry name" value="E_protein_CoV"/>
</dbReference>
<dbReference type="Pfam" id="PF02723">
    <property type="entry name" value="CoV_E"/>
    <property type="match status" value="1"/>
</dbReference>
<dbReference type="PROSITE" id="PS51926">
    <property type="entry name" value="COV_E"/>
    <property type="match status" value="1"/>
</dbReference>
<protein>
    <recommendedName>
        <fullName evidence="1">Envelope small membrane protein</fullName>
        <shortName evidence="1">E protein</shortName>
        <shortName evidence="1">sM protein</shortName>
    </recommendedName>
</protein>
<organism>
    <name type="scientific">Human coronavirus OC43</name>
    <name type="common">HCoV-OC43</name>
    <dbReference type="NCBI Taxonomy" id="31631"/>
    <lineage>
        <taxon>Viruses</taxon>
        <taxon>Riboviria</taxon>
        <taxon>Orthornavirae</taxon>
        <taxon>Pisuviricota</taxon>
        <taxon>Pisoniviricetes</taxon>
        <taxon>Nidovirales</taxon>
        <taxon>Cornidovirineae</taxon>
        <taxon>Coronaviridae</taxon>
        <taxon>Orthocoronavirinae</taxon>
        <taxon>Betacoronavirus</taxon>
        <taxon>Embecovirus</taxon>
        <taxon>Betacoronavirus 1</taxon>
    </lineage>
</organism>
<proteinExistence type="inferred from homology"/>
<sequence>MFMADAYLADTVWYVGQIIFIVAICLLVTIVVVAFLATFKLCIQLCGMCNTLVLSPSIYVFNRGRQFYEFYNDVKPPVLDVDDV</sequence>
<accession>Q04854</accession>
<accession>Q696P6</accession>
<keyword id="KW-0053">Apoptosis</keyword>
<keyword id="KW-1040">Host Golgi apparatus</keyword>
<keyword id="KW-1043">Host membrane</keyword>
<keyword id="KW-0472">Membrane</keyword>
<keyword id="KW-1185">Reference proteome</keyword>
<keyword id="KW-0812">Transmembrane</keyword>
<keyword id="KW-1133">Transmembrane helix</keyword>
<gene>
    <name evidence="1" type="primary">E</name>
    <name type="synonym">sM</name>
    <name type="ORF">5b</name>
</gene>
<comment type="function">
    <text evidence="1">Plays a central role in virus morphogenesis and assembly. Acts as a viroporin and self-assembles in host membranes forming pentameric protein-lipid pores that allow ion transport. Also plays a role in the induction of apoptosis.</text>
</comment>
<comment type="subunit">
    <text evidence="1">Homopentamer. Interacts with membrane protein M in the budding compartment of the host cell, which is located between endoplasmic reticulum and the Golgi complex. Interacts with Nucleoprotein.</text>
</comment>
<comment type="subcellular location">
    <subcellularLocation>
        <location evidence="1">Host Golgi apparatus membrane</location>
        <topology evidence="1">Single-pass type III membrane protein</topology>
    </subcellularLocation>
    <text evidence="1">The cytoplasmic tail functions as a Golgi complex-targeting signal.</text>
</comment>
<comment type="similarity">
    <text evidence="1">Belongs to the betacoronaviruses E protein family.</text>
</comment>
<evidence type="ECO:0000255" key="1">
    <source>
        <dbReference type="HAMAP-Rule" id="MF_04204"/>
    </source>
</evidence>
<name>VEMP_CVHOC</name>
<reference key="1">
    <citation type="journal article" date="1993" name="Virology">
        <title>Human coronavirus OC43 RNA 4 lacks two open reading frames located downstream of the S gene of bovine coronavirus.</title>
        <authorList>
            <person name="Mounir S."/>
            <person name="Talbot P.J."/>
        </authorList>
    </citation>
    <scope>NUCLEOTIDE SEQUENCE [GENOMIC RNA]</scope>
</reference>
<reference key="2">
    <citation type="journal article" date="2004" name="J. Virol.">
        <title>Human respiratory coronavirus OC43: genetic stability and neuroinvasion.</title>
        <authorList>
            <person name="St Jean J.R."/>
            <person name="Jacomy H."/>
            <person name="Desforges M."/>
            <person name="Vabret A."/>
            <person name="Freymuth F."/>
            <person name="Talbot P.J."/>
        </authorList>
    </citation>
    <scope>NUCLEOTIDE SEQUENCE [GENOMIC RNA]</scope>
    <source>
        <strain>Isolate ATCC VR-759</strain>
        <strain>Isolate clinical OC43-Paris</strain>
    </source>
</reference>
<reference key="3">
    <citation type="journal article" date="2005" name="J. Virol.">
        <title>Complete genomic sequence of human coronavirus OC43: molecular clock analysis suggests a relatively recent zoonotic coronavirus transmission event.</title>
        <authorList>
            <person name="Vijgen L."/>
            <person name="Keyaerts E."/>
            <person name="Moes E."/>
            <person name="Thoelen I."/>
            <person name="Wollants E."/>
            <person name="Lemey P."/>
            <person name="Vandamme A.M."/>
            <person name="Van Ranst M."/>
        </authorList>
    </citation>
    <scope>NUCLEOTIDE SEQUENCE [GENOMIC RNA]</scope>
    <source>
        <strain>Isolate ATCC VR-759</strain>
    </source>
</reference>
<feature type="chain" id="PRO_0000106087" description="Envelope small membrane protein">
    <location>
        <begin position="1"/>
        <end position="84"/>
    </location>
</feature>
<feature type="topological domain" description="Virion surface" evidence="1">
    <location>
        <begin position="1"/>
        <end position="18"/>
    </location>
</feature>
<feature type="transmembrane region" description="Helical" evidence="1">
    <location>
        <begin position="19"/>
        <end position="39"/>
    </location>
</feature>
<feature type="topological domain" description="Intravirion" evidence="1">
    <location>
        <begin position="40"/>
        <end position="80"/>
    </location>
</feature>
<organismHost>
    <name type="scientific">Homo sapiens</name>
    <name type="common">Human</name>
    <dbReference type="NCBI Taxonomy" id="9606"/>
</organismHost>